<name>CAH1_PANTR</name>
<sequence length="261" mass="28911">MASPDWGYDDKNGPEQWSKLYPIANGNNQSPVDIKTSETKHDTSLKPISVSYNPATAKEIINVGHSFHVNFEDNDNRSVLKGGPFSDSYRLFQFHFHWGSTNEHGSEHTVDGVKYSAELHIAHWNSAKYSNLAEAASKADGLAVIGVLMKVGEANPKLQKVLDALQAIKTKGKRAPFTNFDPSTLLPSSLDFWTYPGSLTHPPLYESVTWIICKESISVSSEQLAQFRSLLSNVEGDNAVPMQHNNRPTQPLKGRTVRASF</sequence>
<proteinExistence type="inferred from homology"/>
<comment type="function">
    <text evidence="2">Catalyzes the reversible hydration of carbon dioxide. Can hydrate cyanamide to urea.</text>
</comment>
<comment type="catalytic activity">
    <reaction evidence="2">
        <text>hydrogencarbonate + H(+) = CO2 + H2O</text>
        <dbReference type="Rhea" id="RHEA:10748"/>
        <dbReference type="ChEBI" id="CHEBI:15377"/>
        <dbReference type="ChEBI" id="CHEBI:15378"/>
        <dbReference type="ChEBI" id="CHEBI:16526"/>
        <dbReference type="ChEBI" id="CHEBI:17544"/>
        <dbReference type="EC" id="4.2.1.1"/>
    </reaction>
</comment>
<comment type="catalytic activity">
    <reaction evidence="2">
        <text>urea = cyanamide + H2O</text>
        <dbReference type="Rhea" id="RHEA:23056"/>
        <dbReference type="ChEBI" id="CHEBI:15377"/>
        <dbReference type="ChEBI" id="CHEBI:16199"/>
        <dbReference type="ChEBI" id="CHEBI:16698"/>
        <dbReference type="EC" id="4.2.1.69"/>
    </reaction>
</comment>
<comment type="cofactor">
    <cofactor evidence="2">
        <name>Zn(2+)</name>
        <dbReference type="ChEBI" id="CHEBI:29105"/>
    </cofactor>
</comment>
<comment type="activity regulation">
    <text evidence="2">Inhibited by acetazolamide.</text>
</comment>
<comment type="subcellular location">
    <subcellularLocation>
        <location evidence="1">Cytoplasm</location>
    </subcellularLocation>
</comment>
<comment type="similarity">
    <text evidence="6">Belongs to the alpha-carbonic anhydrase family.</text>
</comment>
<gene>
    <name type="primary">CA1</name>
</gene>
<feature type="initiator methionine" description="Removed" evidence="2">
    <location>
        <position position="1"/>
    </location>
</feature>
<feature type="chain" id="PRO_0000077414" description="Carbonic anhydrase 1">
    <location>
        <begin position="2"/>
        <end position="261"/>
    </location>
</feature>
<feature type="domain" description="Alpha-carbonic anhydrase" evidence="4">
    <location>
        <begin position="4"/>
        <end position="261"/>
    </location>
</feature>
<feature type="region of interest" description="Disordered" evidence="5">
    <location>
        <begin position="1"/>
        <end position="40"/>
    </location>
</feature>
<feature type="region of interest" description="Disordered" evidence="5">
    <location>
        <begin position="241"/>
        <end position="261"/>
    </location>
</feature>
<feature type="active site" description="Proton donor/acceptor" evidence="3">
    <location>
        <position position="65"/>
    </location>
</feature>
<feature type="binding site" evidence="2">
    <location>
        <position position="95"/>
    </location>
    <ligand>
        <name>Zn(2+)</name>
        <dbReference type="ChEBI" id="CHEBI:29105"/>
        <note>catalytic</note>
    </ligand>
</feature>
<feature type="binding site" evidence="2">
    <location>
        <position position="97"/>
    </location>
    <ligand>
        <name>Zn(2+)</name>
        <dbReference type="ChEBI" id="CHEBI:29105"/>
        <note>catalytic</note>
    </ligand>
</feature>
<feature type="binding site" evidence="2">
    <location>
        <position position="120"/>
    </location>
    <ligand>
        <name>Zn(2+)</name>
        <dbReference type="ChEBI" id="CHEBI:29105"/>
        <note>catalytic</note>
    </ligand>
</feature>
<feature type="binding site" evidence="3">
    <location>
        <begin position="200"/>
        <end position="201"/>
    </location>
    <ligand>
        <name>substrate</name>
    </ligand>
</feature>
<feature type="binding site" evidence="2">
    <location>
        <position position="200"/>
    </location>
    <ligand>
        <name>substrate</name>
    </ligand>
</feature>
<feature type="modified residue" description="N-acetylalanine" evidence="2">
    <location>
        <position position="2"/>
    </location>
</feature>
<evidence type="ECO:0000250" key="1">
    <source>
        <dbReference type="UniProtKB" id="B0BNN3"/>
    </source>
</evidence>
<evidence type="ECO:0000250" key="2">
    <source>
        <dbReference type="UniProtKB" id="P00915"/>
    </source>
</evidence>
<evidence type="ECO:0000250" key="3">
    <source>
        <dbReference type="UniProtKB" id="P00918"/>
    </source>
</evidence>
<evidence type="ECO:0000255" key="4">
    <source>
        <dbReference type="PROSITE-ProRule" id="PRU01134"/>
    </source>
</evidence>
<evidence type="ECO:0000256" key="5">
    <source>
        <dbReference type="SAM" id="MobiDB-lite"/>
    </source>
</evidence>
<evidence type="ECO:0000305" key="6"/>
<organism>
    <name type="scientific">Pan troglodytes</name>
    <name type="common">Chimpanzee</name>
    <dbReference type="NCBI Taxonomy" id="9598"/>
    <lineage>
        <taxon>Eukaryota</taxon>
        <taxon>Metazoa</taxon>
        <taxon>Chordata</taxon>
        <taxon>Craniata</taxon>
        <taxon>Vertebrata</taxon>
        <taxon>Euteleostomi</taxon>
        <taxon>Mammalia</taxon>
        <taxon>Eutheria</taxon>
        <taxon>Euarchontoglires</taxon>
        <taxon>Primates</taxon>
        <taxon>Haplorrhini</taxon>
        <taxon>Catarrhini</taxon>
        <taxon>Hominidae</taxon>
        <taxon>Pan</taxon>
    </lineage>
</organism>
<accession>Q7M317</accession>
<reference key="1">
    <citation type="journal article" date="1993" name="Gene">
        <title>Characterization of the genes encoding carbonic anhydrase I of chimpanzee and gorilla: comparative analysis of 5' flanking erythroid-specific promoter sequences.</title>
        <authorList>
            <person name="Epperly B.R."/>
            <person name="Bergenhem N.C.H."/>
            <person name="Venta P.J."/>
            <person name="Tashian R.E."/>
        </authorList>
    </citation>
    <scope>NUCLEOTIDE SEQUENCE [GENOMIC DNA]</scope>
</reference>
<dbReference type="EC" id="4.2.1.1" evidence="2"/>
<dbReference type="EC" id="4.2.1.69" evidence="2"/>
<dbReference type="PIR" id="JN0835">
    <property type="entry name" value="JN0835"/>
</dbReference>
<dbReference type="RefSeq" id="NP_001182062.1">
    <property type="nucleotide sequence ID" value="NM_001195133.1"/>
</dbReference>
<dbReference type="RefSeq" id="XP_016814395.2">
    <property type="nucleotide sequence ID" value="XM_016958906.4"/>
</dbReference>
<dbReference type="RefSeq" id="XP_016814396.2">
    <property type="nucleotide sequence ID" value="XM_016958907.4"/>
</dbReference>
<dbReference type="BMRB" id="Q7M317"/>
<dbReference type="SMR" id="Q7M317"/>
<dbReference type="FunCoup" id="Q7M317">
    <property type="interactions" value="162"/>
</dbReference>
<dbReference type="STRING" id="9598.ENSPTRP00000070224"/>
<dbReference type="PaxDb" id="9598-ENSPTRP00000034875"/>
<dbReference type="GeneID" id="464264"/>
<dbReference type="CTD" id="759"/>
<dbReference type="eggNOG" id="KOG0382">
    <property type="taxonomic scope" value="Eukaryota"/>
</dbReference>
<dbReference type="HOGENOM" id="CLU_039326_2_1_1"/>
<dbReference type="InParanoid" id="Q7M317"/>
<dbReference type="TreeFam" id="TF316425"/>
<dbReference type="Proteomes" id="UP000002277">
    <property type="component" value="Unplaced"/>
</dbReference>
<dbReference type="GO" id="GO:0005737">
    <property type="term" value="C:cytoplasm"/>
    <property type="evidence" value="ECO:0000318"/>
    <property type="project" value="GO_Central"/>
</dbReference>
<dbReference type="GO" id="GO:0004089">
    <property type="term" value="F:carbonate dehydratase activity"/>
    <property type="evidence" value="ECO:0000250"/>
    <property type="project" value="UniProtKB"/>
</dbReference>
<dbReference type="GO" id="GO:0018820">
    <property type="term" value="F:cyanamide hydratase activity"/>
    <property type="evidence" value="ECO:0000250"/>
    <property type="project" value="UniProtKB"/>
</dbReference>
<dbReference type="GO" id="GO:0008270">
    <property type="term" value="F:zinc ion binding"/>
    <property type="evidence" value="ECO:0007669"/>
    <property type="project" value="InterPro"/>
</dbReference>
<dbReference type="CDD" id="cd03119">
    <property type="entry name" value="alpha_CA_I_II_III_XIII"/>
    <property type="match status" value="1"/>
</dbReference>
<dbReference type="FunFam" id="3.10.200.10:FF:000001">
    <property type="entry name" value="Carbonic anhydrase 2"/>
    <property type="match status" value="1"/>
</dbReference>
<dbReference type="Gene3D" id="3.10.200.10">
    <property type="entry name" value="Alpha carbonic anhydrase"/>
    <property type="match status" value="1"/>
</dbReference>
<dbReference type="InterPro" id="IPR001148">
    <property type="entry name" value="CA_dom"/>
</dbReference>
<dbReference type="InterPro" id="IPR036398">
    <property type="entry name" value="CA_dom_sf"/>
</dbReference>
<dbReference type="InterPro" id="IPR023561">
    <property type="entry name" value="Carbonic_anhydrase_a-class"/>
</dbReference>
<dbReference type="InterPro" id="IPR018338">
    <property type="entry name" value="Carbonic_anhydrase_a-class_CS"/>
</dbReference>
<dbReference type="PANTHER" id="PTHR18952">
    <property type="entry name" value="CARBONIC ANHYDRASE"/>
    <property type="match status" value="1"/>
</dbReference>
<dbReference type="PANTHER" id="PTHR18952:SF282">
    <property type="entry name" value="CARBONIC ANHYDRASE 1"/>
    <property type="match status" value="1"/>
</dbReference>
<dbReference type="Pfam" id="PF00194">
    <property type="entry name" value="Carb_anhydrase"/>
    <property type="match status" value="1"/>
</dbReference>
<dbReference type="SMART" id="SM01057">
    <property type="entry name" value="Carb_anhydrase"/>
    <property type="match status" value="1"/>
</dbReference>
<dbReference type="SUPFAM" id="SSF51069">
    <property type="entry name" value="Carbonic anhydrase"/>
    <property type="match status" value="1"/>
</dbReference>
<dbReference type="PROSITE" id="PS00162">
    <property type="entry name" value="ALPHA_CA_1"/>
    <property type="match status" value="1"/>
</dbReference>
<dbReference type="PROSITE" id="PS51144">
    <property type="entry name" value="ALPHA_CA_2"/>
    <property type="match status" value="1"/>
</dbReference>
<keyword id="KW-0007">Acetylation</keyword>
<keyword id="KW-0963">Cytoplasm</keyword>
<keyword id="KW-0456">Lyase</keyword>
<keyword id="KW-0479">Metal-binding</keyword>
<keyword id="KW-1185">Reference proteome</keyword>
<keyword id="KW-0862">Zinc</keyword>
<protein>
    <recommendedName>
        <fullName>Carbonic anhydrase 1</fullName>
        <ecNumber evidence="2">4.2.1.1</ecNumber>
    </recommendedName>
    <alternativeName>
        <fullName>Carbonate dehydratase I</fullName>
    </alternativeName>
    <alternativeName>
        <fullName>Carbonic anhydrase I</fullName>
        <shortName>CA-I</shortName>
    </alternativeName>
    <alternativeName>
        <fullName>Cyanamide hydratase CA1</fullName>
        <ecNumber evidence="2">4.2.1.69</ecNumber>
    </alternativeName>
</protein>